<name>ACPS_XANP2</name>
<comment type="function">
    <text evidence="1">Transfers the 4'-phosphopantetheine moiety from coenzyme A to a Ser of acyl-carrier-protein.</text>
</comment>
<comment type="catalytic activity">
    <reaction evidence="1">
        <text>apo-[ACP] + CoA = holo-[ACP] + adenosine 3',5'-bisphosphate + H(+)</text>
        <dbReference type="Rhea" id="RHEA:12068"/>
        <dbReference type="Rhea" id="RHEA-COMP:9685"/>
        <dbReference type="Rhea" id="RHEA-COMP:9690"/>
        <dbReference type="ChEBI" id="CHEBI:15378"/>
        <dbReference type="ChEBI" id="CHEBI:29999"/>
        <dbReference type="ChEBI" id="CHEBI:57287"/>
        <dbReference type="ChEBI" id="CHEBI:58343"/>
        <dbReference type="ChEBI" id="CHEBI:64479"/>
        <dbReference type="EC" id="2.7.8.7"/>
    </reaction>
</comment>
<comment type="cofactor">
    <cofactor evidence="1">
        <name>Mg(2+)</name>
        <dbReference type="ChEBI" id="CHEBI:18420"/>
    </cofactor>
</comment>
<comment type="subcellular location">
    <subcellularLocation>
        <location evidence="1">Cytoplasm</location>
    </subcellularLocation>
</comment>
<comment type="similarity">
    <text evidence="1">Belongs to the P-Pant transferase superfamily. AcpS family.</text>
</comment>
<gene>
    <name evidence="1" type="primary">acpS</name>
    <name type="ordered locus">Xaut_3879</name>
</gene>
<protein>
    <recommendedName>
        <fullName evidence="1">Holo-[acyl-carrier-protein] synthase</fullName>
        <shortName evidence="1">Holo-ACP synthase</shortName>
        <ecNumber evidence="1">2.7.8.7</ecNumber>
    </recommendedName>
    <alternativeName>
        <fullName evidence="1">4'-phosphopantetheinyl transferase AcpS</fullName>
    </alternativeName>
</protein>
<reference key="1">
    <citation type="submission" date="2007-07" db="EMBL/GenBank/DDBJ databases">
        <title>Complete sequence of chromosome of Xanthobacter autotrophicus Py2.</title>
        <authorList>
            <consortium name="US DOE Joint Genome Institute"/>
            <person name="Copeland A."/>
            <person name="Lucas S."/>
            <person name="Lapidus A."/>
            <person name="Barry K."/>
            <person name="Glavina del Rio T."/>
            <person name="Hammon N."/>
            <person name="Israni S."/>
            <person name="Dalin E."/>
            <person name="Tice H."/>
            <person name="Pitluck S."/>
            <person name="Sims D."/>
            <person name="Brettin T."/>
            <person name="Bruce D."/>
            <person name="Detter J.C."/>
            <person name="Han C."/>
            <person name="Tapia R."/>
            <person name="Brainard J."/>
            <person name="Schmutz J."/>
            <person name="Larimer F."/>
            <person name="Land M."/>
            <person name="Hauser L."/>
            <person name="Kyrpides N."/>
            <person name="Kim E."/>
            <person name="Ensigns S.A."/>
            <person name="Richardson P."/>
        </authorList>
    </citation>
    <scope>NUCLEOTIDE SEQUENCE [LARGE SCALE GENOMIC DNA]</scope>
    <source>
        <strain>ATCC BAA-1158 / Py2</strain>
    </source>
</reference>
<accession>A7IM60</accession>
<dbReference type="EC" id="2.7.8.7" evidence="1"/>
<dbReference type="EMBL" id="CP000781">
    <property type="protein sequence ID" value="ABS69103.1"/>
    <property type="molecule type" value="Genomic_DNA"/>
</dbReference>
<dbReference type="SMR" id="A7IM60"/>
<dbReference type="STRING" id="78245.Xaut_3879"/>
<dbReference type="KEGG" id="xau:Xaut_3879"/>
<dbReference type="eggNOG" id="COG0736">
    <property type="taxonomic scope" value="Bacteria"/>
</dbReference>
<dbReference type="HOGENOM" id="CLU_089696_0_2_5"/>
<dbReference type="OrthoDB" id="517356at2"/>
<dbReference type="PhylomeDB" id="A7IM60"/>
<dbReference type="Proteomes" id="UP000002417">
    <property type="component" value="Chromosome"/>
</dbReference>
<dbReference type="GO" id="GO:0005737">
    <property type="term" value="C:cytoplasm"/>
    <property type="evidence" value="ECO:0007669"/>
    <property type="project" value="UniProtKB-SubCell"/>
</dbReference>
<dbReference type="GO" id="GO:0008897">
    <property type="term" value="F:holo-[acyl-carrier-protein] synthase activity"/>
    <property type="evidence" value="ECO:0007669"/>
    <property type="project" value="UniProtKB-UniRule"/>
</dbReference>
<dbReference type="GO" id="GO:0000287">
    <property type="term" value="F:magnesium ion binding"/>
    <property type="evidence" value="ECO:0007669"/>
    <property type="project" value="UniProtKB-UniRule"/>
</dbReference>
<dbReference type="GO" id="GO:0006633">
    <property type="term" value="P:fatty acid biosynthetic process"/>
    <property type="evidence" value="ECO:0007669"/>
    <property type="project" value="UniProtKB-UniRule"/>
</dbReference>
<dbReference type="Gene3D" id="3.90.470.20">
    <property type="entry name" value="4'-phosphopantetheinyl transferase domain"/>
    <property type="match status" value="1"/>
</dbReference>
<dbReference type="HAMAP" id="MF_00101">
    <property type="entry name" value="AcpS"/>
    <property type="match status" value="1"/>
</dbReference>
<dbReference type="InterPro" id="IPR008278">
    <property type="entry name" value="4-PPantetheinyl_Trfase_dom"/>
</dbReference>
<dbReference type="InterPro" id="IPR037143">
    <property type="entry name" value="4-PPantetheinyl_Trfase_dom_sf"/>
</dbReference>
<dbReference type="InterPro" id="IPR002582">
    <property type="entry name" value="ACPS"/>
</dbReference>
<dbReference type="InterPro" id="IPR004568">
    <property type="entry name" value="Ppantetheine-prot_Trfase_dom"/>
</dbReference>
<dbReference type="NCBIfam" id="TIGR00516">
    <property type="entry name" value="acpS"/>
    <property type="match status" value="1"/>
</dbReference>
<dbReference type="NCBIfam" id="TIGR00556">
    <property type="entry name" value="pantethn_trn"/>
    <property type="match status" value="1"/>
</dbReference>
<dbReference type="Pfam" id="PF01648">
    <property type="entry name" value="ACPS"/>
    <property type="match status" value="1"/>
</dbReference>
<dbReference type="SUPFAM" id="SSF56214">
    <property type="entry name" value="4'-phosphopantetheinyl transferase"/>
    <property type="match status" value="1"/>
</dbReference>
<evidence type="ECO:0000255" key="1">
    <source>
        <dbReference type="HAMAP-Rule" id="MF_00101"/>
    </source>
</evidence>
<feature type="chain" id="PRO_1000093930" description="Holo-[acyl-carrier-protein] synthase">
    <location>
        <begin position="1"/>
        <end position="135"/>
    </location>
</feature>
<feature type="binding site" evidence="1">
    <location>
        <position position="8"/>
    </location>
    <ligand>
        <name>Mg(2+)</name>
        <dbReference type="ChEBI" id="CHEBI:18420"/>
    </ligand>
</feature>
<feature type="binding site" evidence="1">
    <location>
        <position position="57"/>
    </location>
    <ligand>
        <name>Mg(2+)</name>
        <dbReference type="ChEBI" id="CHEBI:18420"/>
    </ligand>
</feature>
<organism>
    <name type="scientific">Xanthobacter autotrophicus (strain ATCC BAA-1158 / Py2)</name>
    <dbReference type="NCBI Taxonomy" id="78245"/>
    <lineage>
        <taxon>Bacteria</taxon>
        <taxon>Pseudomonadati</taxon>
        <taxon>Pseudomonadota</taxon>
        <taxon>Alphaproteobacteria</taxon>
        <taxon>Hyphomicrobiales</taxon>
        <taxon>Xanthobacteraceae</taxon>
        <taxon>Xanthobacter</taxon>
    </lineage>
</organism>
<keyword id="KW-0963">Cytoplasm</keyword>
<keyword id="KW-0275">Fatty acid biosynthesis</keyword>
<keyword id="KW-0276">Fatty acid metabolism</keyword>
<keyword id="KW-0444">Lipid biosynthesis</keyword>
<keyword id="KW-0443">Lipid metabolism</keyword>
<keyword id="KW-0460">Magnesium</keyword>
<keyword id="KW-0479">Metal-binding</keyword>
<keyword id="KW-1185">Reference proteome</keyword>
<keyword id="KW-0808">Transferase</keyword>
<sequence length="135" mass="14756">MIIGIGSDFSDARRIARSIERFGDRFLDRVFTPGERRKADQRKLRAETYAKRFAAKEACSKALGTGLSHGVFWRDMEVVNLPSGQPTLMLTGGAARRLAALVPDGYEPHIHLSLTDEGPLTAAYVIISAVPKTGV</sequence>
<proteinExistence type="inferred from homology"/>